<evidence type="ECO:0000250" key="1"/>
<evidence type="ECO:0000250" key="2">
    <source>
        <dbReference type="UniProtKB" id="O75643"/>
    </source>
</evidence>
<evidence type="ECO:0000250" key="3">
    <source>
        <dbReference type="UniProtKB" id="Q6P4T2"/>
    </source>
</evidence>
<evidence type="ECO:0000255" key="4"/>
<evidence type="ECO:0000255" key="5">
    <source>
        <dbReference type="PROSITE-ProRule" id="PRU00541"/>
    </source>
</evidence>
<evidence type="ECO:0000255" key="6">
    <source>
        <dbReference type="PROSITE-ProRule" id="PRU00542"/>
    </source>
</evidence>
<evidence type="ECO:0000256" key="7">
    <source>
        <dbReference type="SAM" id="MobiDB-lite"/>
    </source>
</evidence>
<evidence type="ECO:0000305" key="8"/>
<evidence type="ECO:0007744" key="9">
    <source>
    </source>
</evidence>
<evidence type="ECO:0007744" key="10">
    <source>
    </source>
</evidence>
<protein>
    <recommendedName>
        <fullName>U5 small nuclear ribonucleoprotein 200 kDa helicase</fullName>
        <ecNumber evidence="2">3.6.4.13</ecNumber>
    </recommendedName>
    <alternativeName>
        <fullName>BRR2 homolog</fullName>
    </alternativeName>
    <alternativeName>
        <fullName>U5 snRNP-specific 200 kDa protein</fullName>
        <shortName>U5-200KD</shortName>
    </alternativeName>
</protein>
<accession>F1LNJ2</accession>
<organism>
    <name type="scientific">Rattus norvegicus</name>
    <name type="common">Rat</name>
    <dbReference type="NCBI Taxonomy" id="10116"/>
    <lineage>
        <taxon>Eukaryota</taxon>
        <taxon>Metazoa</taxon>
        <taxon>Chordata</taxon>
        <taxon>Craniata</taxon>
        <taxon>Vertebrata</taxon>
        <taxon>Euteleostomi</taxon>
        <taxon>Mammalia</taxon>
        <taxon>Eutheria</taxon>
        <taxon>Euarchontoglires</taxon>
        <taxon>Glires</taxon>
        <taxon>Rodentia</taxon>
        <taxon>Myomorpha</taxon>
        <taxon>Muroidea</taxon>
        <taxon>Muridae</taxon>
        <taxon>Murinae</taxon>
        <taxon>Rattus</taxon>
    </lineage>
</organism>
<keyword id="KW-0007">Acetylation</keyword>
<keyword id="KW-0067">ATP-binding</keyword>
<keyword id="KW-0175">Coiled coil</keyword>
<keyword id="KW-0347">Helicase</keyword>
<keyword id="KW-0378">Hydrolase</keyword>
<keyword id="KW-1017">Isopeptide bond</keyword>
<keyword id="KW-0507">mRNA processing</keyword>
<keyword id="KW-0508">mRNA splicing</keyword>
<keyword id="KW-0547">Nucleotide-binding</keyword>
<keyword id="KW-0539">Nucleus</keyword>
<keyword id="KW-0597">Phosphoprotein</keyword>
<keyword id="KW-1185">Reference proteome</keyword>
<keyword id="KW-0677">Repeat</keyword>
<keyword id="KW-0687">Ribonucleoprotein</keyword>
<keyword id="KW-0747">Spliceosome</keyword>
<keyword id="KW-0832">Ubl conjugation</keyword>
<comment type="function">
    <text evidence="2">Catalyzes the ATP-dependent unwinding of U4/U6 RNA duplices, an essential step in the assembly of a catalytically active spliceosome. Plays a role in pre-mRNA splicing as core component of precatalytic, catalytic and postcatalytic spliceosomal complexes. As a component of the minor spliceosome, involved in the splicing of U12-type introns in pre-mRNAs (By similarity). Involved in spliceosome assembly, activation and disassembly. Mediates changes in the dynamic network of RNA-RNA interactions in the spliceosome.</text>
</comment>
<comment type="catalytic activity">
    <reaction evidence="2">
        <text>ATP + H2O = ADP + phosphate + H(+)</text>
        <dbReference type="Rhea" id="RHEA:13065"/>
        <dbReference type="ChEBI" id="CHEBI:15377"/>
        <dbReference type="ChEBI" id="CHEBI:15378"/>
        <dbReference type="ChEBI" id="CHEBI:30616"/>
        <dbReference type="ChEBI" id="CHEBI:43474"/>
        <dbReference type="ChEBI" id="CHEBI:456216"/>
        <dbReference type="EC" id="3.6.4.13"/>
    </reaction>
</comment>
<comment type="subunit">
    <text evidence="2">Component of a core complex containing at least PRPF8, SNRNP200, EFTUD2 and SNRNP40. Component of the U5 snRNP and U4/U6-U5 tri-snRNP complexes, building blocks of the spliceosome. Component of the U4/U6-U5 tri-snRNP complex composed of the U4, U6 and U5 snRNAs and at least PRPF3, PRPF4, PRPF6, PRPF8, PRPF31, SNRNP200, TXNL4A, SNRNP40, DDX23, CD2BP2, PPIH, SNU13, EFTUD2, SART1 and USP39. Component of precatalytic, catalytic and postcatalytic spliceosomal complexes. Component of the minor spliceosome, which splices U12-type introns (By similarity). Interacts with C9orf78; the interaction is direct and mutually exclusive with its interaction with WBP4. Interacts with WBP4; the interaction is mutually exclusive with its interaction with C9orf78. Interacts with PRPF8. Interacts with TSSC4; the interaction is direct, excludes recruitment of C9ORF78 and WBP4 to SNRNP200 and negatively regulates its RNA helicase activity (By similarity).</text>
</comment>
<comment type="subcellular location">
    <subcellularLocation>
        <location evidence="2">Nucleus</location>
    </subcellularLocation>
</comment>
<comment type="domain">
    <text evidence="2">Contains two helicase domains. The N-terminal helicase domain has catalytic activity by itself, contrary to C-terminal helicase domain that may have a regulatory role and enhance the activity of the first helicase domain.</text>
</comment>
<comment type="similarity">
    <text evidence="8">Belongs to the helicase family. SKI2 subfamily.</text>
</comment>
<reference key="1">
    <citation type="journal article" date="2004" name="Nature">
        <title>Genome sequence of the Brown Norway rat yields insights into mammalian evolution.</title>
        <authorList>
            <person name="Gibbs R.A."/>
            <person name="Weinstock G.M."/>
            <person name="Metzker M.L."/>
            <person name="Muzny D.M."/>
            <person name="Sodergren E.J."/>
            <person name="Scherer S."/>
            <person name="Scott G."/>
            <person name="Steffen D."/>
            <person name="Worley K.C."/>
            <person name="Burch P.E."/>
            <person name="Okwuonu G."/>
            <person name="Hines S."/>
            <person name="Lewis L."/>
            <person name="Deramo C."/>
            <person name="Delgado O."/>
            <person name="Dugan-Rocha S."/>
            <person name="Miner G."/>
            <person name="Morgan M."/>
            <person name="Hawes A."/>
            <person name="Gill R."/>
            <person name="Holt R.A."/>
            <person name="Adams M.D."/>
            <person name="Amanatides P.G."/>
            <person name="Baden-Tillson H."/>
            <person name="Barnstead M."/>
            <person name="Chin S."/>
            <person name="Evans C.A."/>
            <person name="Ferriera S."/>
            <person name="Fosler C."/>
            <person name="Glodek A."/>
            <person name="Gu Z."/>
            <person name="Jennings D."/>
            <person name="Kraft C.L."/>
            <person name="Nguyen T."/>
            <person name="Pfannkoch C.M."/>
            <person name="Sitter C."/>
            <person name="Sutton G.G."/>
            <person name="Venter J.C."/>
            <person name="Woodage T."/>
            <person name="Smith D."/>
            <person name="Lee H.-M."/>
            <person name="Gustafson E."/>
            <person name="Cahill P."/>
            <person name="Kana A."/>
            <person name="Doucette-Stamm L."/>
            <person name="Weinstock K."/>
            <person name="Fechtel K."/>
            <person name="Weiss R.B."/>
            <person name="Dunn D.M."/>
            <person name="Green E.D."/>
            <person name="Blakesley R.W."/>
            <person name="Bouffard G.G."/>
            <person name="De Jong P.J."/>
            <person name="Osoegawa K."/>
            <person name="Zhu B."/>
            <person name="Marra M."/>
            <person name="Schein J."/>
            <person name="Bosdet I."/>
            <person name="Fjell C."/>
            <person name="Jones S."/>
            <person name="Krzywinski M."/>
            <person name="Mathewson C."/>
            <person name="Siddiqui A."/>
            <person name="Wye N."/>
            <person name="McPherson J."/>
            <person name="Zhao S."/>
            <person name="Fraser C.M."/>
            <person name="Shetty J."/>
            <person name="Shatsman S."/>
            <person name="Geer K."/>
            <person name="Chen Y."/>
            <person name="Abramzon S."/>
            <person name="Nierman W.C."/>
            <person name="Havlak P.H."/>
            <person name="Chen R."/>
            <person name="Durbin K.J."/>
            <person name="Egan A."/>
            <person name="Ren Y."/>
            <person name="Song X.-Z."/>
            <person name="Li B."/>
            <person name="Liu Y."/>
            <person name="Qin X."/>
            <person name="Cawley S."/>
            <person name="Cooney A.J."/>
            <person name="D'Souza L.M."/>
            <person name="Martin K."/>
            <person name="Wu J.Q."/>
            <person name="Gonzalez-Garay M.L."/>
            <person name="Jackson A.R."/>
            <person name="Kalafus K.J."/>
            <person name="McLeod M.P."/>
            <person name="Milosavljevic A."/>
            <person name="Virk D."/>
            <person name="Volkov A."/>
            <person name="Wheeler D.A."/>
            <person name="Zhang Z."/>
            <person name="Bailey J.A."/>
            <person name="Eichler E.E."/>
            <person name="Tuzun E."/>
            <person name="Birney E."/>
            <person name="Mongin E."/>
            <person name="Ureta-Vidal A."/>
            <person name="Woodwark C."/>
            <person name="Zdobnov E."/>
            <person name="Bork P."/>
            <person name="Suyama M."/>
            <person name="Torrents D."/>
            <person name="Alexandersson M."/>
            <person name="Trask B.J."/>
            <person name="Young J.M."/>
            <person name="Huang H."/>
            <person name="Wang H."/>
            <person name="Xing H."/>
            <person name="Daniels S."/>
            <person name="Gietzen D."/>
            <person name="Schmidt J."/>
            <person name="Stevens K."/>
            <person name="Vitt U."/>
            <person name="Wingrove J."/>
            <person name="Camara F."/>
            <person name="Mar Alba M."/>
            <person name="Abril J.F."/>
            <person name="Guigo R."/>
            <person name="Smit A."/>
            <person name="Dubchak I."/>
            <person name="Rubin E.M."/>
            <person name="Couronne O."/>
            <person name="Poliakov A."/>
            <person name="Huebner N."/>
            <person name="Ganten D."/>
            <person name="Goesele C."/>
            <person name="Hummel O."/>
            <person name="Kreitler T."/>
            <person name="Lee Y.-A."/>
            <person name="Monti J."/>
            <person name="Schulz H."/>
            <person name="Zimdahl H."/>
            <person name="Himmelbauer H."/>
            <person name="Lehrach H."/>
            <person name="Jacob H.J."/>
            <person name="Bromberg S."/>
            <person name="Gullings-Handley J."/>
            <person name="Jensen-Seaman M.I."/>
            <person name="Kwitek A.E."/>
            <person name="Lazar J."/>
            <person name="Pasko D."/>
            <person name="Tonellato P.J."/>
            <person name="Twigger S."/>
            <person name="Ponting C.P."/>
            <person name="Duarte J.M."/>
            <person name="Rice S."/>
            <person name="Goodstadt L."/>
            <person name="Beatson S.A."/>
            <person name="Emes R.D."/>
            <person name="Winter E.E."/>
            <person name="Webber C."/>
            <person name="Brandt P."/>
            <person name="Nyakatura G."/>
            <person name="Adetobi M."/>
            <person name="Chiaromonte F."/>
            <person name="Elnitski L."/>
            <person name="Eswara P."/>
            <person name="Hardison R.C."/>
            <person name="Hou M."/>
            <person name="Kolbe D."/>
            <person name="Makova K."/>
            <person name="Miller W."/>
            <person name="Nekrutenko A."/>
            <person name="Riemer C."/>
            <person name="Schwartz S."/>
            <person name="Taylor J."/>
            <person name="Yang S."/>
            <person name="Zhang Y."/>
            <person name="Lindpaintner K."/>
            <person name="Andrews T.D."/>
            <person name="Caccamo M."/>
            <person name="Clamp M."/>
            <person name="Clarke L."/>
            <person name="Curwen V."/>
            <person name="Durbin R.M."/>
            <person name="Eyras E."/>
            <person name="Searle S.M."/>
            <person name="Cooper G.M."/>
            <person name="Batzoglou S."/>
            <person name="Brudno M."/>
            <person name="Sidow A."/>
            <person name="Stone E.A."/>
            <person name="Payseur B.A."/>
            <person name="Bourque G."/>
            <person name="Lopez-Otin C."/>
            <person name="Puente X.S."/>
            <person name="Chakrabarti K."/>
            <person name="Chatterji S."/>
            <person name="Dewey C."/>
            <person name="Pachter L."/>
            <person name="Bray N."/>
            <person name="Yap V.B."/>
            <person name="Caspi A."/>
            <person name="Tesler G."/>
            <person name="Pevzner P.A."/>
            <person name="Haussler D."/>
            <person name="Roskin K.M."/>
            <person name="Baertsch R."/>
            <person name="Clawson H."/>
            <person name="Furey T.S."/>
            <person name="Hinrichs A.S."/>
            <person name="Karolchik D."/>
            <person name="Kent W.J."/>
            <person name="Rosenbloom K.R."/>
            <person name="Trumbower H."/>
            <person name="Weirauch M."/>
            <person name="Cooper D.N."/>
            <person name="Stenson P.D."/>
            <person name="Ma B."/>
            <person name="Brent M."/>
            <person name="Arumugam M."/>
            <person name="Shteynberg D."/>
            <person name="Copley R.R."/>
            <person name="Taylor M.S."/>
            <person name="Riethman H."/>
            <person name="Mudunuri U."/>
            <person name="Peterson J."/>
            <person name="Guyer M."/>
            <person name="Felsenfeld A."/>
            <person name="Old S."/>
            <person name="Mockrin S."/>
            <person name="Collins F.S."/>
        </authorList>
    </citation>
    <scope>NUCLEOTIDE SEQUENCE [LARGE SCALE GENOMIC DNA]</scope>
    <source>
        <strain>Brown Norway</strain>
    </source>
</reference>
<reference key="2">
    <citation type="journal article" date="2006" name="Proc. Natl. Acad. Sci. U.S.A.">
        <title>Quantitative phosphoproteomics of vasopressin-sensitive renal cells: regulation of aquaporin-2 phosphorylation at two sites.</title>
        <authorList>
            <person name="Hoffert J.D."/>
            <person name="Pisitkun T."/>
            <person name="Wang G."/>
            <person name="Shen R.-F."/>
            <person name="Knepper M.A."/>
        </authorList>
    </citation>
    <scope>PHOSPHORYLATION [LARGE SCALE ANALYSIS] AT TYR-709</scope>
    <scope>IDENTIFICATION BY MASS SPECTROMETRY [LARGE SCALE ANALYSIS]</scope>
</reference>
<reference key="3">
    <citation type="journal article" date="2012" name="Nat. Commun.">
        <title>Quantitative maps of protein phosphorylation sites across 14 different rat organs and tissues.</title>
        <authorList>
            <person name="Lundby A."/>
            <person name="Secher A."/>
            <person name="Lage K."/>
            <person name="Nordsborg N.B."/>
            <person name="Dmytriyev A."/>
            <person name="Lundby C."/>
            <person name="Olsen J.V."/>
        </authorList>
    </citation>
    <scope>PHOSPHORYLATION [LARGE SCALE ANALYSIS] AT SER-225</scope>
    <scope>IDENTIFICATION BY MASS SPECTROMETRY [LARGE SCALE ANALYSIS]</scope>
</reference>
<name>U520_RAT</name>
<dbReference type="EC" id="3.6.4.13" evidence="2"/>
<dbReference type="SMR" id="F1LNJ2"/>
<dbReference type="FunCoup" id="F1LNJ2">
    <property type="interactions" value="4733"/>
</dbReference>
<dbReference type="IntAct" id="F1LNJ2">
    <property type="interactions" value="1"/>
</dbReference>
<dbReference type="STRING" id="10116.ENSRNOP00000048598"/>
<dbReference type="CarbonylDB" id="F1LNJ2"/>
<dbReference type="iPTMnet" id="F1LNJ2"/>
<dbReference type="jPOST" id="F1LNJ2"/>
<dbReference type="PaxDb" id="10116-ENSRNOP00000048598"/>
<dbReference type="Ensembl" id="ENSRNOT00000043895.5">
    <property type="protein sequence ID" value="ENSRNOP00000048598.4"/>
    <property type="gene ID" value="ENSRNOG00000012157.8"/>
</dbReference>
<dbReference type="AGR" id="RGD:1561120"/>
<dbReference type="RGD" id="1561120">
    <property type="gene designation" value="Snrnp200"/>
</dbReference>
<dbReference type="eggNOG" id="KOG0951">
    <property type="taxonomic scope" value="Eukaryota"/>
</dbReference>
<dbReference type="InParanoid" id="F1LNJ2"/>
<dbReference type="OMA" id="MNPKEFN"/>
<dbReference type="TreeFam" id="TF300056"/>
<dbReference type="Reactome" id="R-RNO-72163">
    <property type="pathway name" value="mRNA Splicing - Major Pathway"/>
</dbReference>
<dbReference type="Reactome" id="R-RNO-72165">
    <property type="pathway name" value="mRNA Splicing - Minor Pathway"/>
</dbReference>
<dbReference type="PRO" id="PR:F1LNJ2"/>
<dbReference type="Proteomes" id="UP000002494">
    <property type="component" value="Chromosome 3"/>
</dbReference>
<dbReference type="GO" id="GO:0071013">
    <property type="term" value="C:catalytic step 2 spliceosome"/>
    <property type="evidence" value="ECO:0000266"/>
    <property type="project" value="RGD"/>
</dbReference>
<dbReference type="GO" id="GO:0005929">
    <property type="term" value="C:cilium"/>
    <property type="evidence" value="ECO:0007669"/>
    <property type="project" value="Ensembl"/>
</dbReference>
<dbReference type="GO" id="GO:0005654">
    <property type="term" value="C:nucleoplasm"/>
    <property type="evidence" value="ECO:0007669"/>
    <property type="project" value="Ensembl"/>
</dbReference>
<dbReference type="GO" id="GO:0005634">
    <property type="term" value="C:nucleus"/>
    <property type="evidence" value="ECO:0000250"/>
    <property type="project" value="UniProtKB"/>
</dbReference>
<dbReference type="GO" id="GO:0005886">
    <property type="term" value="C:plasma membrane"/>
    <property type="evidence" value="ECO:0007669"/>
    <property type="project" value="Ensembl"/>
</dbReference>
<dbReference type="GO" id="GO:0005681">
    <property type="term" value="C:spliceosomal complex"/>
    <property type="evidence" value="ECO:0000266"/>
    <property type="project" value="RGD"/>
</dbReference>
<dbReference type="GO" id="GO:0071006">
    <property type="term" value="C:U2-type catalytic step 1 spliceosome"/>
    <property type="evidence" value="ECO:0000250"/>
    <property type="project" value="UniProtKB"/>
</dbReference>
<dbReference type="GO" id="GO:0071005">
    <property type="term" value="C:U2-type precatalytic spliceosome"/>
    <property type="evidence" value="ECO:0000250"/>
    <property type="project" value="UniProtKB"/>
</dbReference>
<dbReference type="GO" id="GO:0046540">
    <property type="term" value="C:U4/U6 x U5 tri-snRNP complex"/>
    <property type="evidence" value="ECO:0000266"/>
    <property type="project" value="RGD"/>
</dbReference>
<dbReference type="GO" id="GO:0005682">
    <property type="term" value="C:U5 snRNP"/>
    <property type="evidence" value="ECO:0000266"/>
    <property type="project" value="RGD"/>
</dbReference>
<dbReference type="GO" id="GO:0005524">
    <property type="term" value="F:ATP binding"/>
    <property type="evidence" value="ECO:0007669"/>
    <property type="project" value="UniProtKB-KW"/>
</dbReference>
<dbReference type="GO" id="GO:0016887">
    <property type="term" value="F:ATP hydrolysis activity"/>
    <property type="evidence" value="ECO:0007669"/>
    <property type="project" value="RHEA"/>
</dbReference>
<dbReference type="GO" id="GO:0004386">
    <property type="term" value="F:helicase activity"/>
    <property type="evidence" value="ECO:0000266"/>
    <property type="project" value="RGD"/>
</dbReference>
<dbReference type="GO" id="GO:0042802">
    <property type="term" value="F:identical protein binding"/>
    <property type="evidence" value="ECO:0000266"/>
    <property type="project" value="RGD"/>
</dbReference>
<dbReference type="GO" id="GO:0003676">
    <property type="term" value="F:nucleic acid binding"/>
    <property type="evidence" value="ECO:0007669"/>
    <property type="project" value="InterPro"/>
</dbReference>
<dbReference type="GO" id="GO:0003724">
    <property type="term" value="F:RNA helicase activity"/>
    <property type="evidence" value="ECO:0000250"/>
    <property type="project" value="UniProtKB"/>
</dbReference>
<dbReference type="GO" id="GO:0000398">
    <property type="term" value="P:mRNA splicing, via spliceosome"/>
    <property type="evidence" value="ECO:0000250"/>
    <property type="project" value="UniProtKB"/>
</dbReference>
<dbReference type="GO" id="GO:0000388">
    <property type="term" value="P:spliceosome conformational change to release U4 (or U4atac) and U1 (or U11)"/>
    <property type="evidence" value="ECO:0000266"/>
    <property type="project" value="RGD"/>
</dbReference>
<dbReference type="CDD" id="cd18019">
    <property type="entry name" value="DEXHc_Brr2_1"/>
    <property type="match status" value="1"/>
</dbReference>
<dbReference type="CDD" id="cd18021">
    <property type="entry name" value="DEXHc_Brr2_2"/>
    <property type="match status" value="1"/>
</dbReference>
<dbReference type="CDD" id="cd18795">
    <property type="entry name" value="SF2_C_Ski2"/>
    <property type="match status" value="2"/>
</dbReference>
<dbReference type="FunFam" id="2.60.40.150:FF:000004">
    <property type="entry name" value="RNA helicase, activating signal cointegrator 1"/>
    <property type="match status" value="1"/>
</dbReference>
<dbReference type="FunFam" id="1.10.3380.10:FF:000004">
    <property type="entry name" value="U5 small nuclear ribonucleoprotein 200 kDa helicase"/>
    <property type="match status" value="1"/>
</dbReference>
<dbReference type="FunFam" id="2.60.40.150:FF:000048">
    <property type="entry name" value="U5 small nuclear ribonucleoprotein 200 kDa helicase"/>
    <property type="match status" value="1"/>
</dbReference>
<dbReference type="FunFam" id="3.40.50.300:FF:000368">
    <property type="entry name" value="U5 small nuclear ribonucleoprotein 200 kDa helicase"/>
    <property type="match status" value="1"/>
</dbReference>
<dbReference type="FunFam" id="3.40.50.300:FF:003287">
    <property type="entry name" value="U5 small nuclear ribonucleoprotein 200 kDa helicase"/>
    <property type="match status" value="1"/>
</dbReference>
<dbReference type="FunFam" id="1.10.10.10:FF:000012">
    <property type="entry name" value="U5 small nuclear ribonucleoprotein helicase"/>
    <property type="match status" value="1"/>
</dbReference>
<dbReference type="FunFam" id="1.10.10.10:FF:000024">
    <property type="entry name" value="U5 small nuclear ribonucleoprotein helicase"/>
    <property type="match status" value="1"/>
</dbReference>
<dbReference type="FunFam" id="1.10.150.20:FF:000004">
    <property type="entry name" value="U5 small nuclear ribonucleoprotein helicase"/>
    <property type="match status" value="1"/>
</dbReference>
<dbReference type="FunFam" id="1.10.3380.10:FF:000001">
    <property type="entry name" value="U5 small nuclear ribonucleoprotein helicase"/>
    <property type="match status" value="1"/>
</dbReference>
<dbReference type="FunFam" id="3.40.50.300:FF:000062">
    <property type="entry name" value="U5 small nuclear ribonucleoprotein helicase"/>
    <property type="match status" value="1"/>
</dbReference>
<dbReference type="FunFam" id="3.40.50.300:FF:000254">
    <property type="entry name" value="U5 small nuclear ribonucleoprotein helicase"/>
    <property type="match status" value="1"/>
</dbReference>
<dbReference type="FunFam" id="1.10.150.20:FF:000013">
    <property type="entry name" value="U5 small nuclear ribonucleoprotein kDa helicase"/>
    <property type="match status" value="1"/>
</dbReference>
<dbReference type="Gene3D" id="1.10.150.20">
    <property type="entry name" value="5' to 3' exonuclease, C-terminal subdomain"/>
    <property type="match status" value="2"/>
</dbReference>
<dbReference type="Gene3D" id="2.60.40.150">
    <property type="entry name" value="C2 domain"/>
    <property type="match status" value="2"/>
</dbReference>
<dbReference type="Gene3D" id="3.40.50.300">
    <property type="entry name" value="P-loop containing nucleotide triphosphate hydrolases"/>
    <property type="match status" value="4"/>
</dbReference>
<dbReference type="Gene3D" id="1.10.3380.10">
    <property type="entry name" value="Sec63 N-terminal domain-like domain"/>
    <property type="match status" value="2"/>
</dbReference>
<dbReference type="Gene3D" id="1.10.10.10">
    <property type="entry name" value="Winged helix-like DNA-binding domain superfamily/Winged helix DNA-binding domain"/>
    <property type="match status" value="2"/>
</dbReference>
<dbReference type="InterPro" id="IPR041094">
    <property type="entry name" value="Brr2_helicase_PWI"/>
</dbReference>
<dbReference type="InterPro" id="IPR048863">
    <property type="entry name" value="BRR2_plug"/>
</dbReference>
<dbReference type="InterPro" id="IPR035892">
    <property type="entry name" value="C2_domain_sf"/>
</dbReference>
<dbReference type="InterPro" id="IPR011545">
    <property type="entry name" value="DEAD/DEAH_box_helicase_dom"/>
</dbReference>
<dbReference type="InterPro" id="IPR050474">
    <property type="entry name" value="Hel308_SKI2-like"/>
</dbReference>
<dbReference type="InterPro" id="IPR014001">
    <property type="entry name" value="Helicase_ATP-bd"/>
</dbReference>
<dbReference type="InterPro" id="IPR001650">
    <property type="entry name" value="Helicase_C-like"/>
</dbReference>
<dbReference type="InterPro" id="IPR014756">
    <property type="entry name" value="Ig_E-set"/>
</dbReference>
<dbReference type="InterPro" id="IPR027417">
    <property type="entry name" value="P-loop_NTPase"/>
</dbReference>
<dbReference type="InterPro" id="IPR004179">
    <property type="entry name" value="Sec63-dom"/>
</dbReference>
<dbReference type="InterPro" id="IPR036388">
    <property type="entry name" value="WH-like_DNA-bd_sf"/>
</dbReference>
<dbReference type="InterPro" id="IPR036390">
    <property type="entry name" value="WH_DNA-bd_sf"/>
</dbReference>
<dbReference type="PANTHER" id="PTHR47961:SF4">
    <property type="entry name" value="ACTIVATING SIGNAL COINTEGRATOR 1 COMPLEX SUBUNIT 3"/>
    <property type="match status" value="1"/>
</dbReference>
<dbReference type="PANTHER" id="PTHR47961">
    <property type="entry name" value="DNA POLYMERASE THETA, PUTATIVE (AFU_ORTHOLOGUE AFUA_1G05260)-RELATED"/>
    <property type="match status" value="1"/>
</dbReference>
<dbReference type="Pfam" id="PF21188">
    <property type="entry name" value="BRR2_plug"/>
    <property type="match status" value="1"/>
</dbReference>
<dbReference type="Pfam" id="PF00270">
    <property type="entry name" value="DEAD"/>
    <property type="match status" value="2"/>
</dbReference>
<dbReference type="Pfam" id="PF00271">
    <property type="entry name" value="Helicase_C"/>
    <property type="match status" value="1"/>
</dbReference>
<dbReference type="Pfam" id="PF18149">
    <property type="entry name" value="Helicase_PWI"/>
    <property type="match status" value="1"/>
</dbReference>
<dbReference type="Pfam" id="PF02889">
    <property type="entry name" value="Sec63"/>
    <property type="match status" value="2"/>
</dbReference>
<dbReference type="Pfam" id="PF23445">
    <property type="entry name" value="SNRNP200_wHTH"/>
    <property type="match status" value="2"/>
</dbReference>
<dbReference type="PIRSF" id="PIRSF039073">
    <property type="entry name" value="BRR2"/>
    <property type="match status" value="1"/>
</dbReference>
<dbReference type="SMART" id="SM00487">
    <property type="entry name" value="DEXDc"/>
    <property type="match status" value="2"/>
</dbReference>
<dbReference type="SMART" id="SM00490">
    <property type="entry name" value="HELICc"/>
    <property type="match status" value="2"/>
</dbReference>
<dbReference type="SMART" id="SM00973">
    <property type="entry name" value="Sec63"/>
    <property type="match status" value="2"/>
</dbReference>
<dbReference type="SUPFAM" id="SSF81296">
    <property type="entry name" value="E set domains"/>
    <property type="match status" value="1"/>
</dbReference>
<dbReference type="SUPFAM" id="SSF52540">
    <property type="entry name" value="P-loop containing nucleoside triphosphate hydrolases"/>
    <property type="match status" value="4"/>
</dbReference>
<dbReference type="SUPFAM" id="SSF158702">
    <property type="entry name" value="Sec63 N-terminal domain-like"/>
    <property type="match status" value="2"/>
</dbReference>
<dbReference type="SUPFAM" id="SSF46785">
    <property type="entry name" value="Winged helix' DNA-binding domain"/>
    <property type="match status" value="2"/>
</dbReference>
<dbReference type="PROSITE" id="PS51192">
    <property type="entry name" value="HELICASE_ATP_BIND_1"/>
    <property type="match status" value="2"/>
</dbReference>
<dbReference type="PROSITE" id="PS51194">
    <property type="entry name" value="HELICASE_CTER"/>
    <property type="match status" value="2"/>
</dbReference>
<gene>
    <name type="primary">Snrnp200</name>
</gene>
<proteinExistence type="evidence at protein level"/>
<sequence length="2139" mass="244875">MADVTARSLQYEYKANSNLVLQADRSLIDRTRRDEPTGEVLSLVGKLEGTRMGDKAQRTKPQMQEERRAKRRKRDEDRHDINKMKGYTLLSEGIDEMVGIIYKPKTKETRETYEVLLSFIQAALGDQPRDILCGAADEVLAVLKNEKLRDKERRREIDLLLGQTDDTRYHVLVNLGKKITDYGGDKEIQNMDDNIDETYGVNVQFESDEEEGDEDVYGEVREEASDDDMEGDEAVVRCTLSANLVASGELMSSKKKDLHPRDIDAFWLQRQLSRFYDDAIVSQKKADEVLEILKTASDDRECENQLVLLLGFNTFDFIKVLRQHRMMILYCTLLASAQSEAEKERIMGKMEADPELSKFLYQLHETEKEDLIREERSRRERVRQSRMDTDLETMDLDQGGEALAPRQVLDLEDLVFTQGSHFMANKRCQLPDGSFRRQRKGYEEVHVPALKPKPFGSEEQLLPVEKLPKYAQAGFEGFKTLNRIQSKLYRAALETDENLLLCAPTGAGKTNVALMCMLREIGKHINMDGTINVDDFKIIYIAPMRSLVQEMVGSFGKRLATYGITVAELTGDHQLCKEEISATQIIVCTPEKWDIITRKGGERTYTQLVRLIVLDEIHLLHDDRGPVLEALVARAIRNIEMTQEDVRLIGLSATLPNYEDVATFLRVDPAKGLFYFDNSFRPVPLEQTYVGITEKKAIKRFQIMNEIVYEKIMEHAGKNQVLVFVHSRKETGKTARAIRDMCLEKDTLGLFLREGSASTEVLRTEAEQCKNLELKDLLPYGFAIHHAGMTRVDRTLVEDLFADKHIQVLVSTATLAWGVNLPAHTVIIKGTQVYSPEKGRWTELGALDILQMLGRAGRPQYDTKGEGILITSHGELQYYLSLLNQQLPIESQMVSKLPDMLNAEIVLGNVQNAKDAVNWLGYAYLYIRMLRSPTLYGISHDDLKGDPLLDQRRLDLVHTAALMLDKNNLVKYDKKTGNFQVTELGRIASHYYITNDTVQTYNQLLKPTLSEIELFRVFSLSSEFKNITVREEEKLELQKLLERVPIPVKESIEEPSAKINVLLQAFISQLKLEGFALMADMVYVTQSAGRLMRAIFEIVLNRGWAQLTDKTLNLCKMIDKRMWQSMCPLRQFRKLPEEVVKKIEKKNFPFERLYDLNHNEIGELIRMPKMGKTIHKYVHLFPKLELSVHLQPITRSTLKVELTITPDFQWDEKARLVHGSSEAFWILVEDVDSEVILHHEYFLLKAKYAQDEHLITFFVPVFEPLPPQYFIRVVSDRWLSCETQLPVSFRHLILPEKYPPPTELLDLQPLPVSALRNSAFESLYQDKFPFFNPIQTQVFNTVYNSDDNVFVGAPTGSGKTICAEFAILRMLLQNSEGRCVYITPMEALAEQVYMDWYEKFQDRLNKKVVLLTGETSTDLKLLGKGNIIISTPEKWDILSRRWKQRKNVQNINLFVVDEVHLIGGENGPVLEVICSRMRYISSQIERPIRIVALSSSLSNAKDVAHWLGCSATSTFNFHPNVRPVPLELHIQGFNISHTQTRLLSMAKPVYHAITKHSPKKPVIVFVPSRKQTRLTAIDILTTCAADIQRQRFLHCTEKDLIPYLEKLSDSTLKETLLNGVGYLHEGLSPMERRLVEQLFSSGAIQVVVASRSLCWGMNVAAHLVIIMDTQYYNGKIHAYVDYPIYDVLQMVGHANRPLQDDEGRCVIMCQGSKKDFFKKFLYEPLPVESHLDHCMHDHFNAEIVTKTIENKQDAVDYLTWTFLYRRMTQNPNYYNLQGISHRHLSDHLSELVEQTLSDLEQSKCISIEDEMDVAPLNLGMIAAYYYINYTTIELFSMSLNAKTKVRGLIEIISNAAEYENIPIRHHEDNLLRQLAQKVPHKLNNPKFNDPHVKTNLLLQAHLSRMQLSAELQSDTEEILSKAIRLIQACVDVLSSNGWLSPALAAMELAQMVTQAMWSKDSYLKQLPHFTSEHIKRCTDKGVESVFDIMEMEDEERNALLQLTDSQIADVARFCNRYPNIELSYEVVDKDSIRSGGPVVVLVQLEREEEVTGPVIAPLFPQKREEGWWVVIGDAKSNSLISIKRLTLQQKAKVKLDFVAPATGGHNYTLYFMSDAYMGCDQEYKFSVDVKEAETDSDSD</sequence>
<feature type="chain" id="PRO_0000422050" description="U5 small nuclear ribonucleoprotein 200 kDa helicase">
    <location>
        <begin position="1"/>
        <end position="2139"/>
    </location>
</feature>
<feature type="domain" description="Helicase ATP-binding 1" evidence="5">
    <location>
        <begin position="490"/>
        <end position="673"/>
    </location>
</feature>
<feature type="domain" description="Helicase C-terminal 1" evidence="6">
    <location>
        <begin position="684"/>
        <end position="921"/>
    </location>
</feature>
<feature type="domain" description="SEC63 1">
    <location>
        <begin position="982"/>
        <end position="1289"/>
    </location>
</feature>
<feature type="domain" description="Helicase ATP-binding 2" evidence="5">
    <location>
        <begin position="1340"/>
        <end position="1515"/>
    </location>
</feature>
<feature type="domain" description="Helicase C-terminal 2" evidence="6">
    <location>
        <begin position="1548"/>
        <end position="1756"/>
    </location>
</feature>
<feature type="domain" description="SEC63 2">
    <location>
        <begin position="1815"/>
        <end position="2127"/>
    </location>
</feature>
<feature type="region of interest" description="Disordered" evidence="7">
    <location>
        <begin position="39"/>
        <end position="80"/>
    </location>
</feature>
<feature type="region of interest" description="Interaction with C9orf78 and WBP4" evidence="2">
    <location>
        <begin position="395"/>
        <end position="2132"/>
    </location>
</feature>
<feature type="region of interest" description="Interaction with TSSC4" evidence="2">
    <location>
        <begin position="1285"/>
        <end position="2139"/>
    </location>
</feature>
<feature type="coiled-coil region" evidence="4">
    <location>
        <begin position="54"/>
        <end position="84"/>
    </location>
</feature>
<feature type="short sequence motif" description="DEAH box">
    <location>
        <begin position="615"/>
        <end position="618"/>
    </location>
</feature>
<feature type="short sequence motif" description="DEAH box">
    <location>
        <begin position="1457"/>
        <end position="1460"/>
    </location>
</feature>
<feature type="compositionally biased region" description="Basic and acidic residues" evidence="7">
    <location>
        <begin position="48"/>
        <end position="80"/>
    </location>
</feature>
<feature type="binding site" evidence="5">
    <location>
        <begin position="503"/>
        <end position="510"/>
    </location>
    <ligand>
        <name>ATP</name>
        <dbReference type="ChEBI" id="CHEBI:30616"/>
    </ligand>
</feature>
<feature type="binding site" evidence="5">
    <location>
        <begin position="1353"/>
        <end position="1360"/>
    </location>
    <ligand>
        <name>ATP</name>
        <dbReference type="ChEBI" id="CHEBI:30616"/>
    </ligand>
</feature>
<feature type="modified residue" description="Phosphoserine" evidence="2">
    <location>
        <position position="17"/>
    </location>
</feature>
<feature type="modified residue" description="Phosphoserine" evidence="2">
    <location>
        <position position="26"/>
    </location>
</feature>
<feature type="modified residue" description="Phosphoserine" evidence="10">
    <location>
        <position position="225"/>
    </location>
</feature>
<feature type="modified residue" description="Phosphothreonine" evidence="2">
    <location>
        <position position="389"/>
    </location>
</feature>
<feature type="modified residue" description="Phosphotyrosine" evidence="9">
    <location>
        <position position="709"/>
    </location>
</feature>
<feature type="modified residue" description="N6-acetyllysine; alternate" evidence="2">
    <location>
        <position position="971"/>
    </location>
</feature>
<feature type="modified residue" description="Phosphothreonine" evidence="2">
    <location>
        <position position="1431"/>
    </location>
</feature>
<feature type="modified residue" description="Phosphothreonine" evidence="3">
    <location>
        <position position="1768"/>
    </location>
</feature>
<feature type="modified residue" description="Phosphoserine" evidence="2">
    <location>
        <position position="2005"/>
    </location>
</feature>
<feature type="modified residue" description="Phosphothreonine" evidence="2">
    <location>
        <position position="2134"/>
    </location>
</feature>
<feature type="modified residue" description="Phosphoserine" evidence="2">
    <location>
        <position position="2136"/>
    </location>
</feature>
<feature type="modified residue" description="Phosphoserine" evidence="2">
    <location>
        <position position="2138"/>
    </location>
</feature>
<feature type="cross-link" description="Glycyl lysine isopeptide (Lys-Gly) (interchain with G-Cter in SUMO2)" evidence="2">
    <location>
        <position position="46"/>
    </location>
</feature>
<feature type="cross-link" description="Glycyl lysine isopeptide (Lys-Gly) (interchain with G-Cter in SUMO)" evidence="1">
    <location>
        <position position="944"/>
    </location>
</feature>
<feature type="cross-link" description="Glycyl lysine isopeptide (Lys-Gly) (interchain with G-Cter in SUMO); alternate" evidence="1">
    <location>
        <position position="971"/>
    </location>
</feature>
<feature type="cross-link" description="Glycyl lysine isopeptide (Lys-Gly) (interchain with G-Cter in SUMO)" evidence="1">
    <location>
        <position position="1071"/>
    </location>
</feature>
<feature type="cross-link" description="Glycyl lysine isopeptide (Lys-Gly) (interchain with G-Cter in SUMO)" evidence="1">
    <location>
        <position position="1199"/>
    </location>
</feature>
<feature type="cross-link" description="Glycyl lysine isopeptide (Lys-Gly) (interchain with G-Cter in SUMO)" evidence="1">
    <location>
        <position position="2094"/>
    </location>
</feature>